<reference key="1">
    <citation type="journal article" date="2000" name="Nature">
        <title>The genome sequence of the food-borne pathogen Campylobacter jejuni reveals hypervariable sequences.</title>
        <authorList>
            <person name="Parkhill J."/>
            <person name="Wren B.W."/>
            <person name="Mungall K.L."/>
            <person name="Ketley J.M."/>
            <person name="Churcher C.M."/>
            <person name="Basham D."/>
            <person name="Chillingworth T."/>
            <person name="Davies R.M."/>
            <person name="Feltwell T."/>
            <person name="Holroyd S."/>
            <person name="Jagels K."/>
            <person name="Karlyshev A.V."/>
            <person name="Moule S."/>
            <person name="Pallen M.J."/>
            <person name="Penn C.W."/>
            <person name="Quail M.A."/>
            <person name="Rajandream M.A."/>
            <person name="Rutherford K.M."/>
            <person name="van Vliet A.H.M."/>
            <person name="Whitehead S."/>
            <person name="Barrell B.G."/>
        </authorList>
    </citation>
    <scope>NUCLEOTIDE SEQUENCE [LARGE SCALE GENOMIC DNA]</scope>
    <source>
        <strain>ATCC 700819 / NCTC 11168</strain>
    </source>
</reference>
<gene>
    <name evidence="1" type="primary">thrB</name>
    <name type="ordered locus">Cj0134</name>
</gene>
<proteinExistence type="inferred from homology"/>
<sequence length="292" mass="32501">MKILVPATSANLGPGFDCLGLSLKLFNETQIQKSGVFSISIGGEGSDNIFLKKNNIFVNIFYEIYEKLSGKKDNFRFIFQNNIPLSRGLGSSSAVIVGAIASAYYMSGFKVEKECILDEALIYENHPDNIAPATLGGFVCSLVEKNKVYSIKKEIDKDLAAVVVIPNLAMSTEQSRQALAKNLSFNDAVFNLSHASFLTACFLEKKYEFLKFASQDKLHEINRMKNLPELFEVQKFALENKALMSTLSGSGSSFFSLAFKDDALALAKKIQTKFKDFRVQYLEFDDNGFEIC</sequence>
<comment type="function">
    <text evidence="1">Catalyzes the ATP-dependent phosphorylation of L-homoserine to L-homoserine phosphate.</text>
</comment>
<comment type="catalytic activity">
    <reaction evidence="1">
        <text>L-homoserine + ATP = O-phospho-L-homoserine + ADP + H(+)</text>
        <dbReference type="Rhea" id="RHEA:13985"/>
        <dbReference type="ChEBI" id="CHEBI:15378"/>
        <dbReference type="ChEBI" id="CHEBI:30616"/>
        <dbReference type="ChEBI" id="CHEBI:57476"/>
        <dbReference type="ChEBI" id="CHEBI:57590"/>
        <dbReference type="ChEBI" id="CHEBI:456216"/>
        <dbReference type="EC" id="2.7.1.39"/>
    </reaction>
</comment>
<comment type="pathway">
    <text evidence="1">Amino-acid biosynthesis; L-threonine biosynthesis; L-threonine from L-aspartate: step 4/5.</text>
</comment>
<comment type="subcellular location">
    <subcellularLocation>
        <location evidence="1">Cytoplasm</location>
    </subcellularLocation>
</comment>
<comment type="similarity">
    <text evidence="1">Belongs to the GHMP kinase family. Homoserine kinase subfamily.</text>
</comment>
<keyword id="KW-0028">Amino-acid biosynthesis</keyword>
<keyword id="KW-0067">ATP-binding</keyword>
<keyword id="KW-0963">Cytoplasm</keyword>
<keyword id="KW-0418">Kinase</keyword>
<keyword id="KW-0547">Nucleotide-binding</keyword>
<keyword id="KW-1185">Reference proteome</keyword>
<keyword id="KW-0791">Threonine biosynthesis</keyword>
<keyword id="KW-0808">Transferase</keyword>
<organism>
    <name type="scientific">Campylobacter jejuni subsp. jejuni serotype O:2 (strain ATCC 700819 / NCTC 11168)</name>
    <dbReference type="NCBI Taxonomy" id="192222"/>
    <lineage>
        <taxon>Bacteria</taxon>
        <taxon>Pseudomonadati</taxon>
        <taxon>Campylobacterota</taxon>
        <taxon>Epsilonproteobacteria</taxon>
        <taxon>Campylobacterales</taxon>
        <taxon>Campylobacteraceae</taxon>
        <taxon>Campylobacter</taxon>
    </lineage>
</organism>
<dbReference type="EC" id="2.7.1.39" evidence="1"/>
<dbReference type="EMBL" id="AL111168">
    <property type="protein sequence ID" value="CAL34305.1"/>
    <property type="molecule type" value="Genomic_DNA"/>
</dbReference>
<dbReference type="PIR" id="F81430">
    <property type="entry name" value="F81430"/>
</dbReference>
<dbReference type="RefSeq" id="WP_002888538.1">
    <property type="nucleotide sequence ID" value="NZ_SZUC01000005.1"/>
</dbReference>
<dbReference type="RefSeq" id="YP_002343594.1">
    <property type="nucleotide sequence ID" value="NC_002163.1"/>
</dbReference>
<dbReference type="SMR" id="Q9PIZ3"/>
<dbReference type="IntAct" id="Q9PIZ3">
    <property type="interactions" value="1"/>
</dbReference>
<dbReference type="STRING" id="192222.Cj0134"/>
<dbReference type="PaxDb" id="192222-Cj0134"/>
<dbReference type="EnsemblBacteria" id="CAL34305">
    <property type="protein sequence ID" value="CAL34305"/>
    <property type="gene ID" value="Cj0134"/>
</dbReference>
<dbReference type="GeneID" id="904490"/>
<dbReference type="KEGG" id="cje:Cj0134"/>
<dbReference type="PATRIC" id="fig|192222.6.peg.132"/>
<dbReference type="eggNOG" id="COG0083">
    <property type="taxonomic scope" value="Bacteria"/>
</dbReference>
<dbReference type="HOGENOM" id="CLU_041243_0_0_7"/>
<dbReference type="OrthoDB" id="9769912at2"/>
<dbReference type="UniPathway" id="UPA00050">
    <property type="reaction ID" value="UER00064"/>
</dbReference>
<dbReference type="Proteomes" id="UP000000799">
    <property type="component" value="Chromosome"/>
</dbReference>
<dbReference type="GO" id="GO:0005737">
    <property type="term" value="C:cytoplasm"/>
    <property type="evidence" value="ECO:0007669"/>
    <property type="project" value="UniProtKB-SubCell"/>
</dbReference>
<dbReference type="GO" id="GO:0005524">
    <property type="term" value="F:ATP binding"/>
    <property type="evidence" value="ECO:0007669"/>
    <property type="project" value="UniProtKB-UniRule"/>
</dbReference>
<dbReference type="GO" id="GO:0004413">
    <property type="term" value="F:homoserine kinase activity"/>
    <property type="evidence" value="ECO:0007669"/>
    <property type="project" value="UniProtKB-UniRule"/>
</dbReference>
<dbReference type="GO" id="GO:0009088">
    <property type="term" value="P:threonine biosynthetic process"/>
    <property type="evidence" value="ECO:0007669"/>
    <property type="project" value="UniProtKB-UniRule"/>
</dbReference>
<dbReference type="Gene3D" id="3.30.230.10">
    <property type="match status" value="1"/>
</dbReference>
<dbReference type="Gene3D" id="3.30.70.890">
    <property type="entry name" value="GHMP kinase, C-terminal domain"/>
    <property type="match status" value="1"/>
</dbReference>
<dbReference type="HAMAP" id="MF_00384">
    <property type="entry name" value="Homoser_kinase"/>
    <property type="match status" value="1"/>
</dbReference>
<dbReference type="InterPro" id="IPR013750">
    <property type="entry name" value="GHMP_kinase_C_dom"/>
</dbReference>
<dbReference type="InterPro" id="IPR036554">
    <property type="entry name" value="GHMP_kinase_C_sf"/>
</dbReference>
<dbReference type="InterPro" id="IPR006204">
    <property type="entry name" value="GHMP_kinase_N_dom"/>
</dbReference>
<dbReference type="InterPro" id="IPR006203">
    <property type="entry name" value="GHMP_knse_ATP-bd_CS"/>
</dbReference>
<dbReference type="InterPro" id="IPR000870">
    <property type="entry name" value="Homoserine_kinase"/>
</dbReference>
<dbReference type="InterPro" id="IPR020568">
    <property type="entry name" value="Ribosomal_Su5_D2-typ_SF"/>
</dbReference>
<dbReference type="InterPro" id="IPR014721">
    <property type="entry name" value="Ribsml_uS5_D2-typ_fold_subgr"/>
</dbReference>
<dbReference type="NCBIfam" id="TIGR00191">
    <property type="entry name" value="thrB"/>
    <property type="match status" value="1"/>
</dbReference>
<dbReference type="PANTHER" id="PTHR20861:SF1">
    <property type="entry name" value="HOMOSERINE KINASE"/>
    <property type="match status" value="1"/>
</dbReference>
<dbReference type="PANTHER" id="PTHR20861">
    <property type="entry name" value="HOMOSERINE/4-DIPHOSPHOCYTIDYL-2-C-METHYL-D-ERYTHRITOL KINASE"/>
    <property type="match status" value="1"/>
</dbReference>
<dbReference type="Pfam" id="PF08544">
    <property type="entry name" value="GHMP_kinases_C"/>
    <property type="match status" value="1"/>
</dbReference>
<dbReference type="Pfam" id="PF00288">
    <property type="entry name" value="GHMP_kinases_N"/>
    <property type="match status" value="1"/>
</dbReference>
<dbReference type="PIRSF" id="PIRSF000676">
    <property type="entry name" value="Homoser_kin"/>
    <property type="match status" value="1"/>
</dbReference>
<dbReference type="PRINTS" id="PR00958">
    <property type="entry name" value="HOMSERKINASE"/>
</dbReference>
<dbReference type="SUPFAM" id="SSF55060">
    <property type="entry name" value="GHMP Kinase, C-terminal domain"/>
    <property type="match status" value="1"/>
</dbReference>
<dbReference type="SUPFAM" id="SSF54211">
    <property type="entry name" value="Ribosomal protein S5 domain 2-like"/>
    <property type="match status" value="1"/>
</dbReference>
<dbReference type="PROSITE" id="PS00627">
    <property type="entry name" value="GHMP_KINASES_ATP"/>
    <property type="match status" value="1"/>
</dbReference>
<protein>
    <recommendedName>
        <fullName evidence="1">Homoserine kinase</fullName>
        <shortName evidence="1">HK</shortName>
        <shortName evidence="1">HSK</shortName>
        <ecNumber evidence="1">2.7.1.39</ecNumber>
    </recommendedName>
</protein>
<accession>Q9PIZ3</accession>
<accession>Q0PC03</accession>
<name>KHSE_CAMJE</name>
<evidence type="ECO:0000255" key="1">
    <source>
        <dbReference type="HAMAP-Rule" id="MF_00384"/>
    </source>
</evidence>
<feature type="chain" id="PRO_0000156558" description="Homoserine kinase">
    <location>
        <begin position="1"/>
        <end position="292"/>
    </location>
</feature>
<feature type="binding site" evidence="1">
    <location>
        <begin position="84"/>
        <end position="94"/>
    </location>
    <ligand>
        <name>ATP</name>
        <dbReference type="ChEBI" id="CHEBI:30616"/>
    </ligand>
</feature>